<evidence type="ECO:0000269" key="1">
    <source>
    </source>
</evidence>
<evidence type="ECO:0000305" key="2"/>
<evidence type="ECO:0007829" key="3">
    <source>
        <dbReference type="PDB" id="1RH5"/>
    </source>
</evidence>
<evidence type="ECO:0007829" key="4">
    <source>
        <dbReference type="PDB" id="1RHZ"/>
    </source>
</evidence>
<evidence type="ECO:0007829" key="5">
    <source>
        <dbReference type="PDB" id="2YXQ"/>
    </source>
</evidence>
<organism>
    <name type="scientific">Methanocaldococcus jannaschii (strain ATCC 43067 / DSM 2661 / JAL-1 / JCM 10045 / NBRC 100440)</name>
    <name type="common">Methanococcus jannaschii</name>
    <dbReference type="NCBI Taxonomy" id="243232"/>
    <lineage>
        <taxon>Archaea</taxon>
        <taxon>Methanobacteriati</taxon>
        <taxon>Methanobacteriota</taxon>
        <taxon>Methanomada group</taxon>
        <taxon>Methanococci</taxon>
        <taxon>Methanococcales</taxon>
        <taxon>Methanocaldococcaceae</taxon>
        <taxon>Methanocaldococcus</taxon>
    </lineage>
</organism>
<name>SECY_METJA</name>
<accession>Q60175</accession>
<comment type="function">
    <text>The central subunit of the protein translocation channel SecYEG. Consists of two halves formed by TMs 1-5 and 6-10. These two domains form a lateral gate at the front which open onto the bilayer between TMs 2 and 7, and are clamped together by SecE at the back. The channel is closed by both a pore ring composed of hydrophobic SecY resides and a short helix (helix 2A) on the extracellular side of the membrane which forms a plug. The plug probably moves laterally to allow the channel to open. The ring and the pore may move independently.</text>
</comment>
<comment type="subunit">
    <text evidence="1">Component of the Sec protein translocase complex. Heterotrimer consisting of alpha (SecY), beta (SecG) and gamma (SecE) subunits. The heterotrimers can form oligomers, although 1 heterotrimer is thought to be able to translocate proteins. Interacts with the ribosome. May interact with SecDF, and other proteins may be involved.</text>
</comment>
<comment type="subcellular location">
    <subcellularLocation>
        <location>Cell membrane</location>
        <topology>Multi-pass membrane protein</topology>
    </subcellularLocation>
</comment>
<comment type="similarity">
    <text evidence="2">Belongs to the SecY/SEC61-alpha family.</text>
</comment>
<dbReference type="EMBL" id="L77117">
    <property type="protein sequence ID" value="AAB98469.1"/>
    <property type="molecule type" value="Genomic_DNA"/>
</dbReference>
<dbReference type="RefSeq" id="WP_010869979.1">
    <property type="nucleotide sequence ID" value="NC_000909.1"/>
</dbReference>
<dbReference type="PDB" id="1RH5">
    <property type="method" value="X-ray"/>
    <property type="resolution" value="3.20 A"/>
    <property type="chains" value="A=1-436"/>
</dbReference>
<dbReference type="PDB" id="1RHZ">
    <property type="method" value="X-ray"/>
    <property type="resolution" value="3.50 A"/>
    <property type="chains" value="A=1-436"/>
</dbReference>
<dbReference type="PDB" id="2YXQ">
    <property type="method" value="X-ray"/>
    <property type="resolution" value="3.50 A"/>
    <property type="chains" value="A=1-436"/>
</dbReference>
<dbReference type="PDB" id="2YXR">
    <property type="method" value="X-ray"/>
    <property type="resolution" value="3.60 A"/>
    <property type="chains" value="A=1-436"/>
</dbReference>
<dbReference type="PDB" id="3BO0">
    <property type="method" value="EM"/>
    <property type="resolution" value="9.60 A"/>
    <property type="chains" value="A=2-433"/>
</dbReference>
<dbReference type="PDB" id="3BO1">
    <property type="method" value="EM"/>
    <property type="resolution" value="9.60 A"/>
    <property type="chains" value="A=2-433"/>
</dbReference>
<dbReference type="PDB" id="3DKN">
    <property type="method" value="EM"/>
    <property type="resolution" value="8.70 A"/>
    <property type="chains" value="A=2-433"/>
</dbReference>
<dbReference type="PDB" id="4V4N">
    <property type="method" value="EM"/>
    <property type="resolution" value="9.00 A"/>
    <property type="chains" value="AX=1-436"/>
</dbReference>
<dbReference type="PDB" id="4V7I">
    <property type="method" value="EM"/>
    <property type="chains" value="A=2-433"/>
</dbReference>
<dbReference type="PDBsum" id="1RH5"/>
<dbReference type="PDBsum" id="1RHZ"/>
<dbReference type="PDBsum" id="2YXQ"/>
<dbReference type="PDBsum" id="2YXR"/>
<dbReference type="PDBsum" id="3BO0"/>
<dbReference type="PDBsum" id="3BO1"/>
<dbReference type="PDBsum" id="3DKN"/>
<dbReference type="PDBsum" id="4V4N"/>
<dbReference type="PDBsum" id="4V7I"/>
<dbReference type="SMR" id="Q60175"/>
<dbReference type="FunCoup" id="Q60175">
    <property type="interactions" value="195"/>
</dbReference>
<dbReference type="STRING" id="243232.MJ_0478"/>
<dbReference type="TCDB" id="3.A.5.7.4">
    <property type="family name" value="the general secretory pathway (sec) family"/>
</dbReference>
<dbReference type="PaxDb" id="243232-MJ_0478"/>
<dbReference type="EnsemblBacteria" id="AAB98469">
    <property type="protein sequence ID" value="AAB98469"/>
    <property type="gene ID" value="MJ_0478"/>
</dbReference>
<dbReference type="GeneID" id="1451340"/>
<dbReference type="KEGG" id="mja:MJ_0478"/>
<dbReference type="eggNOG" id="arCOG04169">
    <property type="taxonomic scope" value="Archaea"/>
</dbReference>
<dbReference type="HOGENOM" id="CLU_031763_3_0_2"/>
<dbReference type="InParanoid" id="Q60175"/>
<dbReference type="OrthoDB" id="371914at2157"/>
<dbReference type="PhylomeDB" id="Q60175"/>
<dbReference type="EvolutionaryTrace" id="Q60175"/>
<dbReference type="Proteomes" id="UP000000805">
    <property type="component" value="Chromosome"/>
</dbReference>
<dbReference type="GO" id="GO:0005886">
    <property type="term" value="C:plasma membrane"/>
    <property type="evidence" value="ECO:0007669"/>
    <property type="project" value="UniProtKB-SubCell"/>
</dbReference>
<dbReference type="GO" id="GO:0008320">
    <property type="term" value="F:protein transmembrane transporter activity"/>
    <property type="evidence" value="ECO:0000318"/>
    <property type="project" value="GO_Central"/>
</dbReference>
<dbReference type="GO" id="GO:0005048">
    <property type="term" value="F:signal sequence binding"/>
    <property type="evidence" value="ECO:0000318"/>
    <property type="project" value="GO_Central"/>
</dbReference>
<dbReference type="GO" id="GO:0006616">
    <property type="term" value="P:SRP-dependent cotranslational protein targeting to membrane, translocation"/>
    <property type="evidence" value="ECO:0000318"/>
    <property type="project" value="GO_Central"/>
</dbReference>
<dbReference type="FunFam" id="1.10.3370.10:FF:000013">
    <property type="entry name" value="Protein translocase subunit SecY"/>
    <property type="match status" value="1"/>
</dbReference>
<dbReference type="Gene3D" id="1.10.3370.10">
    <property type="entry name" value="SecY subunit domain"/>
    <property type="match status" value="1"/>
</dbReference>
<dbReference type="HAMAP" id="MF_01465">
    <property type="entry name" value="SecY"/>
    <property type="match status" value="1"/>
</dbReference>
<dbReference type="InterPro" id="IPR026593">
    <property type="entry name" value="SecY"/>
</dbReference>
<dbReference type="InterPro" id="IPR002208">
    <property type="entry name" value="SecY/SEC61-alpha"/>
</dbReference>
<dbReference type="InterPro" id="IPR030659">
    <property type="entry name" value="SecY_CS"/>
</dbReference>
<dbReference type="InterPro" id="IPR023201">
    <property type="entry name" value="SecY_dom_sf"/>
</dbReference>
<dbReference type="InterPro" id="IPR019561">
    <property type="entry name" value="Translocon_Sec61/SecY_plug_dom"/>
</dbReference>
<dbReference type="NCBIfam" id="TIGR00967">
    <property type="entry name" value="3a0501s007"/>
    <property type="match status" value="1"/>
</dbReference>
<dbReference type="NCBIfam" id="NF006341">
    <property type="entry name" value="PRK08568.1-5"/>
    <property type="match status" value="1"/>
</dbReference>
<dbReference type="PANTHER" id="PTHR10906">
    <property type="entry name" value="SECY/SEC61-ALPHA FAMILY MEMBER"/>
    <property type="match status" value="1"/>
</dbReference>
<dbReference type="Pfam" id="PF10559">
    <property type="entry name" value="Plug_translocon"/>
    <property type="match status" value="1"/>
</dbReference>
<dbReference type="Pfam" id="PF00344">
    <property type="entry name" value="SecY"/>
    <property type="match status" value="1"/>
</dbReference>
<dbReference type="PIRSF" id="PIRSF004557">
    <property type="entry name" value="SecY"/>
    <property type="match status" value="1"/>
</dbReference>
<dbReference type="PRINTS" id="PR00303">
    <property type="entry name" value="SECYTRNLCASE"/>
</dbReference>
<dbReference type="SUPFAM" id="SSF103491">
    <property type="entry name" value="Preprotein translocase SecY subunit"/>
    <property type="match status" value="1"/>
</dbReference>
<dbReference type="PROSITE" id="PS00755">
    <property type="entry name" value="SECY_1"/>
    <property type="match status" value="1"/>
</dbReference>
<dbReference type="PROSITE" id="PS00756">
    <property type="entry name" value="SECY_2"/>
    <property type="match status" value="1"/>
</dbReference>
<protein>
    <recommendedName>
        <fullName>Protein translocase subunit SecY</fullName>
    </recommendedName>
    <alternativeName>
        <fullName>Protein transport protein SEC61 subunit alpha homolog</fullName>
    </alternativeName>
</protein>
<gene>
    <name type="primary">secY</name>
    <name type="ordered locus">MJ0478</name>
</gene>
<proteinExistence type="evidence at protein level"/>
<sequence>MKKLIPILEKIPEVELPVKEITFKEKLKWTGIVLVLYFIMGCIDVYTAGAQIPAIFEFWQTITASRIGTLITLGIGPIVTAGIIMQLLVGSGIIQMDLSIPENRALFQGCQKLLSIIMCFVEAVLFVGAGAFGILTPLLAFLVIIQIAFGSIILIYLDEIVSKYGIGSGIGLFIAAGVSQTIFVGALGPEGYLWKFLNSLIQGVPNIEYIAPIIGTIIVFLMVVYAECMRVEIPLAHGRIKGAVGKYPIKFVYVSNIPVILAAALFANIQLWGLALYRMGIPILGHYEGGRAVDGIAYYLSTPYGLSSVISDPIHAIVYMIAMIITCVMFGIFWVETTGLDPKSMAKRIGSLGMAIKGFRKSEKAIEHRLKRYIPPLTVMSSAFVGFLATIANFIGALGGGTGVLLTVSIVYRMYEQLLREKVSELHPAIAKLLNK</sequence>
<reference key="1">
    <citation type="journal article" date="1996" name="Science">
        <title>Complete genome sequence of the methanogenic archaeon, Methanococcus jannaschii.</title>
        <authorList>
            <person name="Bult C.J."/>
            <person name="White O."/>
            <person name="Olsen G.J."/>
            <person name="Zhou L."/>
            <person name="Fleischmann R.D."/>
            <person name="Sutton G.G."/>
            <person name="Blake J.A."/>
            <person name="FitzGerald L.M."/>
            <person name="Clayton R.A."/>
            <person name="Gocayne J.D."/>
            <person name="Kerlavage A.R."/>
            <person name="Dougherty B.A."/>
            <person name="Tomb J.-F."/>
            <person name="Adams M.D."/>
            <person name="Reich C.I."/>
            <person name="Overbeek R."/>
            <person name="Kirkness E.F."/>
            <person name="Weinstock K.G."/>
            <person name="Merrick J.M."/>
            <person name="Glodek A."/>
            <person name="Scott J.L."/>
            <person name="Geoghagen N.S.M."/>
            <person name="Weidman J.F."/>
            <person name="Fuhrmann J.L."/>
            <person name="Nguyen D."/>
            <person name="Utterback T.R."/>
            <person name="Kelley J.M."/>
            <person name="Peterson J.D."/>
            <person name="Sadow P.W."/>
            <person name="Hanna M.C."/>
            <person name="Cotton M.D."/>
            <person name="Roberts K.M."/>
            <person name="Hurst M.A."/>
            <person name="Kaine B.P."/>
            <person name="Borodovsky M."/>
            <person name="Klenk H.-P."/>
            <person name="Fraser C.M."/>
            <person name="Smith H.O."/>
            <person name="Woese C.R."/>
            <person name="Venter J.C."/>
        </authorList>
    </citation>
    <scope>NUCLEOTIDE SEQUENCE [LARGE SCALE GENOMIC DNA]</scope>
    <source>
        <strain>ATCC 43067 / DSM 2661 / JAL-1 / JCM 10045 / NBRC 100440</strain>
    </source>
</reference>
<reference key="2">
    <citation type="journal article" date="2004" name="Nature">
        <title>X-ray structure of a protein-conducting channel.</title>
        <authorList>
            <person name="Van den Berg B."/>
            <person name="Clemons W.M. Jr."/>
            <person name="Collinson I."/>
            <person name="Modis Y."/>
            <person name="Hartmann E."/>
            <person name="Harrison S.C."/>
            <person name="Rapoport T.A."/>
        </authorList>
    </citation>
    <scope>X-RAY CRYSTALLOGRAPHY (3.2 ANGSTROMS) OF 1-423 IN COMPLEX WITH SECE AND SECG</scope>
</reference>
<reference key="3">
    <citation type="journal article" date="2007" name="Mol. Cell">
        <title>The plug domain of the SecY protein stabilizes the closed state of the translocation channel and maintains a membrane seal.</title>
        <authorList>
            <person name="Li W."/>
            <person name="Schulman S."/>
            <person name="Boyd D."/>
            <person name="Erlandson K."/>
            <person name="Beckwith J."/>
            <person name="Rapoport T.A."/>
        </authorList>
    </citation>
    <scope>X-RAY CRYSTALLOGRAPHY (3.5 ANGSTROMS) OF PLUG DELETION MUTANTS</scope>
</reference>
<reference key="4">
    <citation type="journal article" date="2007" name="Mol. Cell">
        <title>Ribosome binding of a single copy of the SecY complex: implications for protein translocation.</title>
        <authorList>
            <person name="Menetret J.F."/>
            <person name="Schaletzky J."/>
            <person name="Clemons W.M. Jr."/>
            <person name="Osborne A.R."/>
            <person name="Skanland S.S."/>
            <person name="Denison C."/>
            <person name="Gygi S.P."/>
            <person name="Kirkpatrick D.S."/>
            <person name="Park E."/>
            <person name="Ludtke S.J."/>
            <person name="Rapoport T.A."/>
            <person name="Akey C.W."/>
        </authorList>
    </citation>
    <scope>STRUCTURE BY ELECTRON MICROSCOPY (9.6 ANGSTROMS) OF 2-433 DOCKED ONTO E.COLI RIBOSOMES</scope>
</reference>
<reference key="5">
    <citation type="journal article" date="2008" name="Structure">
        <title>Single copies of Sec61 and TRAP associate with a nontranslating mammalian ribosome.</title>
        <authorList>
            <person name="Menetret J.F."/>
            <person name="Hegde R.S."/>
            <person name="Aguiar M."/>
            <person name="Gygi S.P."/>
            <person name="Park E."/>
            <person name="Rapoport T.A."/>
            <person name="Akey C.W."/>
        </authorList>
    </citation>
    <scope>STRUCTURE BY ELECTRON MICROSCOPY (8.7 ANGSTROMS) OF 2-433 DOCKED ONTO DOG RIBOSOMES</scope>
</reference>
<reference key="6">
    <citation type="journal article" date="2009" name="Structure">
        <title>Regulation of the protein-conducting channel by a bound ribosome.</title>
        <authorList>
            <person name="Gumbart J."/>
            <person name="Trabuco L.G."/>
            <person name="Schreiner E."/>
            <person name="Villa E."/>
            <person name="Schulten K."/>
        </authorList>
    </citation>
    <scope>STRUCTURE BY ELECTRON MICROSCOPY OF 2-433 DOCKED ONTO E.COLI RIBOSOMES</scope>
</reference>
<keyword id="KW-0002">3D-structure</keyword>
<keyword id="KW-1003">Cell membrane</keyword>
<keyword id="KW-0472">Membrane</keyword>
<keyword id="KW-0653">Protein transport</keyword>
<keyword id="KW-1185">Reference proteome</keyword>
<keyword id="KW-0811">Translocation</keyword>
<keyword id="KW-0812">Transmembrane</keyword>
<keyword id="KW-1133">Transmembrane helix</keyword>
<keyword id="KW-0813">Transport</keyword>
<feature type="chain" id="PRO_0000131764" description="Protein translocase subunit SecY">
    <location>
        <begin position="1"/>
        <end position="436"/>
    </location>
</feature>
<feature type="topological domain" description="Cytoplasmic">
    <location>
        <begin position="1"/>
        <end position="28"/>
    </location>
</feature>
<feature type="transmembrane region" description="Helical; Name=Helix 1">
    <location>
        <begin position="29"/>
        <end position="46"/>
    </location>
</feature>
<feature type="topological domain" description="Extracellular">
    <location>
        <begin position="47"/>
        <end position="55"/>
    </location>
</feature>
<feature type="transmembrane region" description="Discontinuously helical; Name=Helix 2">
    <location>
        <begin position="56"/>
        <end position="88"/>
    </location>
</feature>
<feature type="intramembrane region" description="Helical; Name=Helix 2A">
    <location>
        <begin position="56"/>
        <end position="63"/>
    </location>
</feature>
<feature type="intramembrane region">
    <location>
        <begin position="64"/>
        <end position="69"/>
    </location>
</feature>
<feature type="intramembrane region" description="Helical; Name=Helix 2B">
    <location>
        <begin position="70"/>
        <end position="88"/>
    </location>
</feature>
<feature type="topological domain" description="Cytoplasmic">
    <location>
        <begin position="89"/>
        <end position="110"/>
    </location>
</feature>
<feature type="transmembrane region" description="Helical; Name=Helix 3">
    <location>
        <begin position="111"/>
        <end position="129"/>
    </location>
</feature>
<feature type="topological domain" description="Extracellular">
    <location>
        <begin position="130"/>
        <end position="140"/>
    </location>
</feature>
<feature type="transmembrane region" description="Helical; Name=Helix 4">
    <location>
        <begin position="141"/>
        <end position="161"/>
    </location>
</feature>
<feature type="topological domain" description="Cytoplasmic">
    <location>
        <begin position="162"/>
        <end position="168"/>
    </location>
</feature>
<feature type="transmembrane region" description="Helical; Name=Helix 5">
    <location>
        <begin position="169"/>
        <end position="191"/>
    </location>
</feature>
<feature type="topological domain" description="Extracellular">
    <location>
        <begin position="192"/>
        <end position="209"/>
    </location>
</feature>
<feature type="transmembrane region" description="Helical; Name=Helix 6">
    <location>
        <begin position="210"/>
        <end position="227"/>
    </location>
</feature>
<feature type="topological domain" description="Cytoplasmic">
    <location>
        <begin position="228"/>
        <end position="255"/>
    </location>
</feature>
<feature type="transmembrane region" description="Helical; Name=Helix 7">
    <location>
        <begin position="256"/>
        <end position="277"/>
    </location>
</feature>
<feature type="topological domain" description="Extracellular">
    <location>
        <begin position="278"/>
        <end position="312"/>
    </location>
</feature>
<feature type="transmembrane region" description="Helical; Name=Helix 8">
    <location>
        <begin position="313"/>
        <end position="331"/>
    </location>
</feature>
<feature type="topological domain" description="Cytoplasmic">
    <location>
        <begin position="332"/>
        <end position="382"/>
    </location>
</feature>
<feature type="transmembrane region" description="Helical; Name=Helix 9">
    <location>
        <begin position="383"/>
        <end position="397"/>
    </location>
</feature>
<feature type="topological domain" description="Extracellular">
    <location>
        <position position="398"/>
    </location>
</feature>
<feature type="transmembrane region" description="Helical; Name=Helix 10">
    <location>
        <begin position="399"/>
        <end position="412"/>
    </location>
</feature>
<feature type="topological domain" description="Cytoplasmic">
    <location>
        <begin position="413"/>
        <end position="436"/>
    </location>
</feature>
<feature type="site" description="Pore ring">
    <location>
        <position position="75"/>
    </location>
</feature>
<feature type="site" description="Pore ring">
    <location>
        <position position="79"/>
    </location>
</feature>
<feature type="site" description="Pore ring">
    <location>
        <position position="174"/>
    </location>
</feature>
<feature type="site" description="Pore ring">
    <location>
        <position position="179"/>
    </location>
</feature>
<feature type="site" description="Pore ring">
    <location>
        <position position="260"/>
    </location>
</feature>
<feature type="site" description="Pore ring">
    <location>
        <position position="406"/>
    </location>
</feature>
<feature type="helix" evidence="3">
    <location>
        <begin position="5"/>
        <end position="10"/>
    </location>
</feature>
<feature type="helix" evidence="3">
    <location>
        <begin position="23"/>
        <end position="40"/>
    </location>
</feature>
<feature type="helix" evidence="5">
    <location>
        <begin position="54"/>
        <end position="57"/>
    </location>
</feature>
<feature type="helix" evidence="3">
    <location>
        <begin position="59"/>
        <end position="63"/>
    </location>
</feature>
<feature type="turn" evidence="3">
    <location>
        <begin position="70"/>
        <end position="75"/>
    </location>
</feature>
<feature type="helix" evidence="3">
    <location>
        <begin position="76"/>
        <end position="91"/>
    </location>
</feature>
<feature type="helix" evidence="3">
    <location>
        <begin position="101"/>
        <end position="128"/>
    </location>
</feature>
<feature type="strand" evidence="4">
    <location>
        <begin position="131"/>
        <end position="133"/>
    </location>
</feature>
<feature type="helix" evidence="3">
    <location>
        <begin position="137"/>
        <end position="164"/>
    </location>
</feature>
<feature type="strand" evidence="3">
    <location>
        <begin position="165"/>
        <end position="167"/>
    </location>
</feature>
<feature type="helix" evidence="3">
    <location>
        <begin position="169"/>
        <end position="187"/>
    </location>
</feature>
<feature type="helix" evidence="3">
    <location>
        <begin position="192"/>
        <end position="199"/>
    </location>
</feature>
<feature type="turn" evidence="3">
    <location>
        <begin position="200"/>
        <end position="203"/>
    </location>
</feature>
<feature type="helix" evidence="3">
    <location>
        <begin position="207"/>
        <end position="209"/>
    </location>
</feature>
<feature type="helix" evidence="3">
    <location>
        <begin position="211"/>
        <end position="226"/>
    </location>
</feature>
<feature type="strand" evidence="3">
    <location>
        <begin position="230"/>
        <end position="234"/>
    </location>
</feature>
<feature type="strand" evidence="3">
    <location>
        <begin position="238"/>
        <end position="240"/>
    </location>
</feature>
<feature type="strand" evidence="3">
    <location>
        <begin position="246"/>
        <end position="251"/>
    </location>
</feature>
<feature type="helix" evidence="4">
    <location>
        <begin position="253"/>
        <end position="255"/>
    </location>
</feature>
<feature type="helix" evidence="3">
    <location>
        <begin position="257"/>
        <end position="277"/>
    </location>
</feature>
<feature type="strand" evidence="3">
    <location>
        <begin position="289"/>
        <end position="295"/>
    </location>
</feature>
<feature type="helix" evidence="3">
    <location>
        <begin position="298"/>
        <end position="300"/>
    </location>
</feature>
<feature type="strand" evidence="3">
    <location>
        <begin position="305"/>
        <end position="307"/>
    </location>
</feature>
<feature type="helix" evidence="3">
    <location>
        <begin position="313"/>
        <end position="338"/>
    </location>
</feature>
<feature type="helix" evidence="3">
    <location>
        <begin position="342"/>
        <end position="348"/>
    </location>
</feature>
<feature type="strand" evidence="4">
    <location>
        <begin position="356"/>
        <end position="359"/>
    </location>
</feature>
<feature type="helix" evidence="3">
    <location>
        <begin position="363"/>
        <end position="395"/>
    </location>
</feature>
<feature type="helix" evidence="3">
    <location>
        <begin position="402"/>
        <end position="419"/>
    </location>
</feature>
<feature type="strand" evidence="4">
    <location>
        <begin position="427"/>
        <end position="429"/>
    </location>
</feature>